<evidence type="ECO:0000250" key="1"/>
<evidence type="ECO:0000250" key="2">
    <source>
        <dbReference type="UniProtKB" id="Q9NV96"/>
    </source>
</evidence>
<evidence type="ECO:0000255" key="3"/>
<evidence type="ECO:0000256" key="4">
    <source>
        <dbReference type="SAM" id="MobiDB-lite"/>
    </source>
</evidence>
<evidence type="ECO:0000269" key="5">
    <source>
    </source>
</evidence>
<evidence type="ECO:0000305" key="6"/>
<protein>
    <recommendedName>
        <fullName evidence="2">Cell cycle control protein 50A</fullName>
    </recommendedName>
    <alternativeName>
        <fullName>P4-ATPase flippase complex beta subunit TMEM30A</fullName>
    </alternativeName>
    <alternativeName>
        <fullName>Transmembrane protein 30A</fullName>
    </alternativeName>
</protein>
<feature type="initiator methionine" description="Removed" evidence="2">
    <location>
        <position position="1"/>
    </location>
</feature>
<feature type="chain" id="PRO_0000429840" description="Cell cycle control protein 50A">
    <location>
        <begin position="2"/>
        <end position="361"/>
    </location>
</feature>
<feature type="topological domain" description="Cytoplasmic" evidence="3">
    <location>
        <begin position="2"/>
        <end position="49"/>
    </location>
</feature>
<feature type="transmembrane region" description="Helical" evidence="3">
    <location>
        <begin position="50"/>
        <end position="70"/>
    </location>
</feature>
<feature type="topological domain" description="Exoplasmic loop" evidence="3">
    <location>
        <begin position="71"/>
        <end position="325"/>
    </location>
</feature>
<feature type="transmembrane region" description="Helical" evidence="3">
    <location>
        <begin position="326"/>
        <end position="346"/>
    </location>
</feature>
<feature type="topological domain" description="Cytoplasmic" evidence="3">
    <location>
        <begin position="347"/>
        <end position="361"/>
    </location>
</feature>
<feature type="region of interest" description="Disordered" evidence="4">
    <location>
        <begin position="1"/>
        <end position="28"/>
    </location>
</feature>
<feature type="region of interest" description="Required for ATPase and aminophospholipid flippase activity" evidence="5">
    <location>
        <begin position="2"/>
        <end position="48"/>
    </location>
</feature>
<feature type="region of interest" description="Interaction with ATP8A2" evidence="5">
    <location>
        <begin position="49"/>
        <end position="348"/>
    </location>
</feature>
<feature type="modified residue" description="N-acetylalanine" evidence="2">
    <location>
        <position position="2"/>
    </location>
</feature>
<feature type="glycosylation site" description="N-linked (GlcNAc...) asparagine" evidence="3">
    <location>
        <position position="180"/>
    </location>
</feature>
<feature type="glycosylation site" description="N-linked (GlcNAc...) asparagine" evidence="3">
    <location>
        <position position="190"/>
    </location>
</feature>
<feature type="glycosylation site" description="N-linked (GlcNAc...) asparagine" evidence="3">
    <location>
        <position position="294"/>
    </location>
</feature>
<feature type="disulfide bond" evidence="2">
    <location>
        <begin position="91"/>
        <end position="104"/>
    </location>
</feature>
<feature type="disulfide bond" evidence="2">
    <location>
        <begin position="94"/>
        <end position="102"/>
    </location>
</feature>
<feature type="disulfide bond" evidence="2">
    <location>
        <begin position="157"/>
        <end position="171"/>
    </location>
</feature>
<feature type="mutagenesis site" description="Reduces ATP8A2 protein abundance. No effect on interaction with ATP8A2, ATPase activity or flippase activity." evidence="5">
    <original>T</original>
    <variation>A</variation>
    <location>
        <position position="109"/>
    </location>
</feature>
<feature type="mutagenesis site" description="Reduces ATP8A2 protein abundance. No effect on interaction with ATP8A2 or ATPase activity." evidence="5">
    <original>T</original>
    <variation>A</variation>
    <location>
        <position position="182"/>
    </location>
</feature>
<feature type="mutagenesis site" description="Reduces ATP8A2 protein abundance. No effect on interaction with ATP8A2 or ATPase activity." evidence="5">
    <original>S</original>
    <variation>A</variation>
    <location>
        <position position="192"/>
    </location>
</feature>
<feature type="mutagenesis site" description="No effect on ATP8A2 protein abundance, interaction with ATP8A2 or ATPase activity." evidence="5">
    <original>T</original>
    <variation>A</variation>
    <location>
        <position position="285"/>
    </location>
</feature>
<feature type="mutagenesis site" description="Reduces ATP8A2 protein abundance. No effect on interaction with ATP8A2 or ATPase activity." evidence="5">
    <original>T</original>
    <variation>A</variation>
    <location>
        <position position="296"/>
    </location>
</feature>
<sequence>MAMNYNAKDEVDGGPPCPPGGTAKTRRPDNTAFKQQRLPAWQPILTAGTVLPTFFIIGLIFIPIGIGIFVTSNNIREIEIDYTGTDPSSPCNKCLSPNVTPCVCTINFTLEQSFEGNVFMYYGLSNFYQNHRRYVKSRDDGQLNGDPSALLNPSKECEPYRRNEDKPIAPCGAIANSMFNDTLELFQVGNASDLTPIPLKKKGIAWWTDKNVKFRNPPGTDPLEERFKGTTKPVNWVKPVYMLDSDEDNNGFINEDFIVWMRTAALPTFRKLYRLIERKNDLHPTLPAGRYYLNITYNYPVHSFDGRKRMILSTISWMGGKNPFLGIAYITIGSISFLLGVVLLVINHKYRNSSNTADITI</sequence>
<keyword id="KW-0007">Acetylation</keyword>
<keyword id="KW-1003">Cell membrane</keyword>
<keyword id="KW-0966">Cell projection</keyword>
<keyword id="KW-0968">Cytoplasmic vesicle</keyword>
<keyword id="KW-1015">Disulfide bond</keyword>
<keyword id="KW-0325">Glycoprotein</keyword>
<keyword id="KW-0333">Golgi apparatus</keyword>
<keyword id="KW-0445">Lipid transport</keyword>
<keyword id="KW-0472">Membrane</keyword>
<keyword id="KW-1185">Reference proteome</keyword>
<keyword id="KW-0812">Transmembrane</keyword>
<keyword id="KW-1133">Transmembrane helix</keyword>
<keyword id="KW-0813">Transport</keyword>
<comment type="function">
    <text evidence="5">Accessory component of a P4-ATPase flippase complex which catalyzes the hydrolysis of ATP coupled to the transport of aminophospholipids from the outer to the inner leaflet of various membranes and ensures the maintenance of asymmetric distribution of phospholipids. Phospholipid translocation also seems to be implicated in vesicle formation and in uptake of lipid signaling molecules. The beta subunit may assist in binding of the phospholipid substrate. Required for the proper folding, assembly and ER to Golgi exit of the ATP8A2:TMEM30A flippase complex. ATP8A2:TMEM30A may be involved in regulation of neurite outgrowth, and, reconstituted to liposomes, predomiminantly transports phosphatidylserine (PS) and to a lesser extent phosphatidylethanolamine (PE). The ATP8A1:TMEM30A flippase complex seems to play a role in regulation of cell migration probably involving flippase-mediated translocation of phosphatidylethanolamine (PE) at the plasma membrane. Required for the formation of the ATP8A2, ATP8B1 and ATP8B2 P-type ATPAse intermediate phosphoenzymes. Involved in uptake of platelet-activating factor (PAF). Can also mediate the export of alpha subunits ATP8A1, ATP8B1, ATP8B2, ATP8B4, ATP10A, ATP10B, ATP10D, ATP11A, ATP11B and ATP11C from the ER to other membrane localizations.</text>
</comment>
<comment type="subunit">
    <text evidence="2 5">Component of various P4-ATPase flippase complexes which consists of a catalytic alpha subunit and an accessory beta subunit (PubMed:21454556). Interacts with ATP8A1 to form a flippase complex; this complex forms an intermediate phosphoenzyme. Interacts with ATP8A2 to form a flippase complex (By similarity). ATP8B1:TMEM30A and ATP8B2:TMEM30A flippase complexes have been shown to form intermediate phosphoenzymes in vitro (PubMed:21454556). Interacts with alpha subunits ATP8A1, ATP8B1, ATP8B2, ATP8B4, ATP10A, ATP10B, ATP10D, ATP11A, ATP11B and ATP11C (By similarity).</text>
</comment>
<comment type="subcellular location">
    <subcellularLocation>
        <location evidence="2">Membrane</location>
        <topology evidence="1">Multi-pass membrane protein</topology>
    </subcellularLocation>
    <subcellularLocation>
        <location evidence="5">Golgi apparatus</location>
    </subcellularLocation>
    <subcellularLocation>
        <location evidence="2">Cytoplasmic vesicle</location>
        <location evidence="2">Secretory vesicle membrane</location>
    </subcellularLocation>
    <subcellularLocation>
        <location evidence="2">Apical cell membrane</location>
    </subcellularLocation>
    <subcellularLocation>
        <location evidence="5">Photoreceptor inner segment</location>
    </subcellularLocation>
    <subcellularLocation>
        <location evidence="5">Cell projection</location>
        <location evidence="5">Cilium</location>
        <location evidence="5">Photoreceptor outer segment</location>
    </subcellularLocation>
</comment>
<comment type="tissue specificity">
    <text evidence="5">Expressed in photoreceptor cells; detected in retina outer segment and other retinal layers (at protein level).</text>
</comment>
<comment type="domain">
    <text evidence="5">The N-terminal domain seems to play a role in the reaction cycle of the catalytic subunit such as ATP8A2.</text>
</comment>
<comment type="PTM">
    <text evidence="5">N-glycosylated; contributes to ATP8A2:TMEM30A flippase complex assembly but not to functional activity.</text>
</comment>
<comment type="similarity">
    <text evidence="6">Belongs to the CDC50/LEM3 family.</text>
</comment>
<organism>
    <name type="scientific">Bos taurus</name>
    <name type="common">Bovine</name>
    <dbReference type="NCBI Taxonomy" id="9913"/>
    <lineage>
        <taxon>Eukaryota</taxon>
        <taxon>Metazoa</taxon>
        <taxon>Chordata</taxon>
        <taxon>Craniata</taxon>
        <taxon>Vertebrata</taxon>
        <taxon>Euteleostomi</taxon>
        <taxon>Mammalia</taxon>
        <taxon>Eutheria</taxon>
        <taxon>Laurasiatheria</taxon>
        <taxon>Artiodactyla</taxon>
        <taxon>Ruminantia</taxon>
        <taxon>Pecora</taxon>
        <taxon>Bovidae</taxon>
        <taxon>Bovinae</taxon>
        <taxon>Bos</taxon>
    </lineage>
</organism>
<reference key="1">
    <citation type="journal article" date="2009" name="Genome Biol.">
        <title>A whole-genome assembly of the domestic cow, Bos taurus.</title>
        <authorList>
            <person name="Zimin A.V."/>
            <person name="Delcher A.L."/>
            <person name="Florea L."/>
            <person name="Kelley D.R."/>
            <person name="Schatz M.C."/>
            <person name="Puiu D."/>
            <person name="Hanrahan F."/>
            <person name="Pertea G."/>
            <person name="Van Tassell C.P."/>
            <person name="Sonstegard T.S."/>
            <person name="Marcais G."/>
            <person name="Roberts M."/>
            <person name="Subramanian P."/>
            <person name="Yorke J.A."/>
            <person name="Salzberg S.L."/>
        </authorList>
    </citation>
    <scope>NUCLEOTIDE SEQUENCE [LARGE SCALE GENOMIC DNA]</scope>
    <source>
        <strain>Hereford</strain>
    </source>
</reference>
<reference key="2">
    <citation type="submission" date="2006-06" db="EMBL/GenBank/DDBJ databases">
        <authorList>
            <consortium name="NIH - Mammalian Gene Collection (MGC) project"/>
        </authorList>
    </citation>
    <scope>NUCLEOTIDE SEQUENCE [LARGE SCALE MRNA]</scope>
</reference>
<reference key="3">
    <citation type="journal article" date="2011" name="J. Biol. Chem.">
        <title>Critical role of the beta-subunit CDC50A in the stable expression, assembly, subcellular localization, and lipid transport activity of the P4-ATPase ATP8A2.</title>
        <authorList>
            <person name="Coleman J.A."/>
            <person name="Molday R.S."/>
        </authorList>
    </citation>
    <scope>FUNCTION</scope>
    <scope>FUNCTION OF THE ATP8A2:TMEM30A FLIPPASE COMPLEX</scope>
    <scope>IDENTIFICATION IN ATP8A2:TMEM30A FLIPPASE COMPLEX</scope>
    <scope>TOPOLOGY</scope>
    <scope>SUBCELLULAR LOCATION</scope>
    <scope>DOMAIN</scope>
    <scope>GLYCOSYLATION</scope>
    <scope>TISSUE SPECIFICITY</scope>
    <scope>MUTAGENESIS OF THR-109; THR-182; SER-192; THR-285 AND THR-296</scope>
</reference>
<dbReference type="EMBL" id="DAAA02025272">
    <property type="status" value="NOT_ANNOTATED_CDS"/>
    <property type="molecule type" value="Genomic_DNA"/>
</dbReference>
<dbReference type="EMBL" id="DAAA02025273">
    <property type="status" value="NOT_ANNOTATED_CDS"/>
    <property type="molecule type" value="Genomic_DNA"/>
</dbReference>
<dbReference type="EMBL" id="DAAA02025274">
    <property type="status" value="NOT_ANNOTATED_CDS"/>
    <property type="molecule type" value="Genomic_DNA"/>
</dbReference>
<dbReference type="EMBL" id="BC118287">
    <property type="protein sequence ID" value="AAI18288.1"/>
    <property type="molecule type" value="mRNA"/>
</dbReference>
<dbReference type="RefSeq" id="NP_001068691.1">
    <property type="nucleotide sequence ID" value="NM_001075223.1"/>
</dbReference>
<dbReference type="SMR" id="Q17QL5"/>
<dbReference type="FunCoup" id="Q17QL5">
    <property type="interactions" value="3459"/>
</dbReference>
<dbReference type="STRING" id="9913.ENSBTAP00000006718"/>
<dbReference type="GlyCosmos" id="Q17QL5">
    <property type="glycosylation" value="3 sites, No reported glycans"/>
</dbReference>
<dbReference type="GlyGen" id="Q17QL5">
    <property type="glycosylation" value="3 sites"/>
</dbReference>
<dbReference type="PaxDb" id="9913-ENSBTAP00000006718"/>
<dbReference type="GeneID" id="505797"/>
<dbReference type="KEGG" id="bta:505797"/>
<dbReference type="CTD" id="55754"/>
<dbReference type="VEuPathDB" id="HostDB:ENSBTAG00000005100"/>
<dbReference type="eggNOG" id="KOG2952">
    <property type="taxonomic scope" value="Eukaryota"/>
</dbReference>
<dbReference type="HOGENOM" id="CLU_025025_1_0_1"/>
<dbReference type="InParanoid" id="Q17QL5"/>
<dbReference type="OMA" id="IPWSMFN"/>
<dbReference type="OrthoDB" id="340608at2759"/>
<dbReference type="TreeFam" id="TF300873"/>
<dbReference type="Reactome" id="R-BTA-6798695">
    <property type="pathway name" value="Neutrophil degranulation"/>
</dbReference>
<dbReference type="Proteomes" id="UP000009136">
    <property type="component" value="Chromosome 9"/>
</dbReference>
<dbReference type="Bgee" id="ENSBTAG00000005100">
    <property type="expression patterns" value="Expressed in spermatid and 108 other cell types or tissues"/>
</dbReference>
<dbReference type="GO" id="GO:0016324">
    <property type="term" value="C:apical plasma membrane"/>
    <property type="evidence" value="ECO:0007669"/>
    <property type="project" value="UniProtKB-SubCell"/>
</dbReference>
<dbReference type="GO" id="GO:0005783">
    <property type="term" value="C:endoplasmic reticulum"/>
    <property type="evidence" value="ECO:0000318"/>
    <property type="project" value="GO_Central"/>
</dbReference>
<dbReference type="GO" id="GO:0005794">
    <property type="term" value="C:Golgi apparatus"/>
    <property type="evidence" value="ECO:0000318"/>
    <property type="project" value="GO_Central"/>
</dbReference>
<dbReference type="GO" id="GO:1990531">
    <property type="term" value="C:phospholipid-translocating ATPase complex"/>
    <property type="evidence" value="ECO:0000250"/>
    <property type="project" value="UniProtKB"/>
</dbReference>
<dbReference type="GO" id="GO:0001917">
    <property type="term" value="C:photoreceptor inner segment"/>
    <property type="evidence" value="ECO:0007669"/>
    <property type="project" value="UniProtKB-SubCell"/>
</dbReference>
<dbReference type="GO" id="GO:0001750">
    <property type="term" value="C:photoreceptor outer segment"/>
    <property type="evidence" value="ECO:0007669"/>
    <property type="project" value="UniProtKB-SubCell"/>
</dbReference>
<dbReference type="GO" id="GO:0005886">
    <property type="term" value="C:plasma membrane"/>
    <property type="evidence" value="ECO:0000318"/>
    <property type="project" value="GO_Central"/>
</dbReference>
<dbReference type="GO" id="GO:0030658">
    <property type="term" value="C:transport vesicle membrane"/>
    <property type="evidence" value="ECO:0007669"/>
    <property type="project" value="UniProtKB-SubCell"/>
</dbReference>
<dbReference type="GO" id="GO:0045332">
    <property type="term" value="P:phospholipid translocation"/>
    <property type="evidence" value="ECO:0000314"/>
    <property type="project" value="UniProtKB"/>
</dbReference>
<dbReference type="InterPro" id="IPR005045">
    <property type="entry name" value="CDC50/LEM3_fam"/>
</dbReference>
<dbReference type="PANTHER" id="PTHR10926">
    <property type="entry name" value="CELL CYCLE CONTROL PROTEIN 50"/>
    <property type="match status" value="1"/>
</dbReference>
<dbReference type="PANTHER" id="PTHR10926:SF17">
    <property type="entry name" value="CELL CYCLE CONTROL PROTEIN 50A"/>
    <property type="match status" value="1"/>
</dbReference>
<dbReference type="Pfam" id="PF03381">
    <property type="entry name" value="CDC50"/>
    <property type="match status" value="1"/>
</dbReference>
<dbReference type="PIRSF" id="PIRSF015840">
    <property type="entry name" value="DUF284_TM_euk"/>
    <property type="match status" value="1"/>
</dbReference>
<gene>
    <name evidence="2" type="primary">TMEM30A</name>
</gene>
<proteinExistence type="evidence at protein level"/>
<name>CC50A_BOVIN</name>
<accession>Q17QL5</accession>
<accession>F1MNX5</accession>